<proteinExistence type="evidence at transcript level"/>
<gene>
    <name evidence="1" type="primary">matK</name>
    <name type="synonym">ycf14</name>
</gene>
<geneLocation type="chloroplast"/>
<organism>
    <name type="scientific">Hordeum vulgare</name>
    <name type="common">Barley</name>
    <dbReference type="NCBI Taxonomy" id="4513"/>
    <lineage>
        <taxon>Eukaryota</taxon>
        <taxon>Viridiplantae</taxon>
        <taxon>Streptophyta</taxon>
        <taxon>Embryophyta</taxon>
        <taxon>Tracheophyta</taxon>
        <taxon>Spermatophyta</taxon>
        <taxon>Magnoliopsida</taxon>
        <taxon>Liliopsida</taxon>
        <taxon>Poales</taxon>
        <taxon>Poaceae</taxon>
        <taxon>BOP clade</taxon>
        <taxon>Pooideae</taxon>
        <taxon>Triticodae</taxon>
        <taxon>Triticeae</taxon>
        <taxon>Hordeinae</taxon>
        <taxon>Hordeum</taxon>
    </lineage>
</organism>
<evidence type="ECO:0000255" key="1">
    <source>
        <dbReference type="HAMAP-Rule" id="MF_01390"/>
    </source>
</evidence>
<evidence type="ECO:0000269" key="2">
    <source>
    </source>
</evidence>
<evidence type="ECO:0000305" key="3"/>
<protein>
    <recommendedName>
        <fullName evidence="1">Maturase K</fullName>
    </recommendedName>
    <alternativeName>
        <fullName evidence="1">Intron maturase</fullName>
    </alternativeName>
</protein>
<dbReference type="EMBL" id="X64129">
    <property type="protein sequence ID" value="CAA45481.1"/>
    <property type="status" value="ALT_SEQ"/>
    <property type="molecule type" value="Genomic_DNA"/>
</dbReference>
<dbReference type="EMBL" id="EF115541">
    <property type="protein sequence ID" value="ABK79394.1"/>
    <property type="status" value="ALT_SEQ"/>
    <property type="molecule type" value="Genomic_DNA"/>
</dbReference>
<dbReference type="EMBL" id="X52765">
    <property type="protein sequence ID" value="CAA36972.1"/>
    <property type="molecule type" value="Genomic_DNA"/>
</dbReference>
<dbReference type="EMBL" id="X07942">
    <property type="protein sequence ID" value="CAA30762.1"/>
    <property type="status" value="ALT_SEQ"/>
    <property type="molecule type" value="Genomic_DNA"/>
</dbReference>
<dbReference type="PIR" id="S01291">
    <property type="entry name" value="S01291"/>
</dbReference>
<dbReference type="PIR" id="S28765">
    <property type="entry name" value="S28765"/>
</dbReference>
<dbReference type="PIR" id="S49151">
    <property type="entry name" value="S49151"/>
</dbReference>
<dbReference type="IntAct" id="P17158">
    <property type="interactions" value="1"/>
</dbReference>
<dbReference type="ExpressionAtlas" id="P17158">
    <property type="expression patterns" value="differential"/>
</dbReference>
<dbReference type="GO" id="GO:0009507">
    <property type="term" value="C:chloroplast"/>
    <property type="evidence" value="ECO:0007669"/>
    <property type="project" value="UniProtKB-SubCell"/>
</dbReference>
<dbReference type="GO" id="GO:0003723">
    <property type="term" value="F:RNA binding"/>
    <property type="evidence" value="ECO:0007669"/>
    <property type="project" value="UniProtKB-KW"/>
</dbReference>
<dbReference type="GO" id="GO:0006397">
    <property type="term" value="P:mRNA processing"/>
    <property type="evidence" value="ECO:0007669"/>
    <property type="project" value="UniProtKB-KW"/>
</dbReference>
<dbReference type="GO" id="GO:0008380">
    <property type="term" value="P:RNA splicing"/>
    <property type="evidence" value="ECO:0007669"/>
    <property type="project" value="UniProtKB-UniRule"/>
</dbReference>
<dbReference type="GO" id="GO:0008033">
    <property type="term" value="P:tRNA processing"/>
    <property type="evidence" value="ECO:0007669"/>
    <property type="project" value="UniProtKB-KW"/>
</dbReference>
<dbReference type="HAMAP" id="MF_01390">
    <property type="entry name" value="MatK"/>
    <property type="match status" value="1"/>
</dbReference>
<dbReference type="InterPro" id="IPR024937">
    <property type="entry name" value="Domain_X"/>
</dbReference>
<dbReference type="InterPro" id="IPR002866">
    <property type="entry name" value="Maturase_MatK"/>
</dbReference>
<dbReference type="InterPro" id="IPR024942">
    <property type="entry name" value="Maturase_MatK_N"/>
</dbReference>
<dbReference type="PANTHER" id="PTHR34811">
    <property type="entry name" value="MATURASE K"/>
    <property type="match status" value="1"/>
</dbReference>
<dbReference type="PANTHER" id="PTHR34811:SF1">
    <property type="entry name" value="MATURASE K"/>
    <property type="match status" value="1"/>
</dbReference>
<dbReference type="Pfam" id="PF01348">
    <property type="entry name" value="Intron_maturas2"/>
    <property type="match status" value="1"/>
</dbReference>
<dbReference type="Pfam" id="PF01824">
    <property type="entry name" value="MatK_N"/>
    <property type="match status" value="1"/>
</dbReference>
<name>MATK_HORVU</name>
<accession>P17158</accession>
<accession>A1E9H2</accession>
<comment type="function">
    <text evidence="3">Usually encoded in the trnK tRNA gene intron. Probably assists in splicing its own and other chloroplast group II introns (Probable).</text>
</comment>
<comment type="subcellular location">
    <subcellularLocation>
        <location>Plastid</location>
        <location>Chloroplast</location>
    </subcellularLocation>
</comment>
<comment type="RNA editing">
    <location>
        <position position="420" evidence="2"/>
    </location>
    <text>Occurs in the presence and absence of plastid ribosomes.</text>
</comment>
<comment type="similarity">
    <text evidence="1">Belongs to the intron maturase 2 family. MatK subfamily.</text>
</comment>
<keyword id="KW-0150">Chloroplast</keyword>
<keyword id="KW-0507">mRNA processing</keyword>
<keyword id="KW-0934">Plastid</keyword>
<keyword id="KW-0691">RNA editing</keyword>
<keyword id="KW-0694">RNA-binding</keyword>
<keyword id="KW-0819">tRNA processing</keyword>
<feature type="chain" id="PRO_0000143425" description="Maturase K">
    <location>
        <begin position="1"/>
        <end position="511"/>
    </location>
</feature>
<feature type="sequence conflict" description="In Ref. 3; CAA36972." evidence="3" ref="3">
    <original>IPFSLRELSCPKEKEIPKFQNLRSIHSIFPFLEDKFLHLDYLSHIE</original>
    <variation>NIILATGIILSERKRNTKVSEFTLYSFNISLFRRQIFAFGLSITYR</variation>
    <location>
        <begin position="109"/>
        <end position="154"/>
    </location>
</feature>
<feature type="sequence conflict" description="In Ref. 4; CAA30762." evidence="3" ref="4">
    <original>RIWYLDIIGINDLVNPLN</original>
    <variation>PYLVFGYYRYQ</variation>
    <location>
        <begin position="494"/>
        <end position="511"/>
    </location>
</feature>
<reference key="1">
    <citation type="journal article" date="1995" name="Plant Mol. Biol.">
        <title>Transcription, splicing and editing of plastid RNAs in the nonphotosynthetic plant Epifagus virginiana.</title>
        <authorList>
            <person name="Ems S.C."/>
            <person name="Morden C.W."/>
            <person name="Dixon C.K."/>
            <person name="Wolfe K.H."/>
            <person name="dePamphilis C.W."/>
            <person name="Palmer J.D."/>
        </authorList>
    </citation>
    <scope>NUCLEOTIDE SEQUENCE [GENOMIC DNA]</scope>
</reference>
<reference key="2">
    <citation type="journal article" date="2007" name="Theor. Appl. Genet.">
        <title>Complete chloroplast genome sequences of Hordeum vulgare, Sorghum bicolor and Agrostis stolonifera, and comparative analyses with other grass genomes.</title>
        <authorList>
            <person name="Saski C."/>
            <person name="Lee S.-B."/>
            <person name="Fjellheim S."/>
            <person name="Guda C."/>
            <person name="Jansen R.K."/>
            <person name="Luo H."/>
            <person name="Tomkins J."/>
            <person name="Rognli O.A."/>
            <person name="Daniell H."/>
            <person name="Clarke J.L."/>
        </authorList>
    </citation>
    <scope>NUCLEOTIDE SEQUENCE [LARGE SCALE GENOMIC DNA]</scope>
    <source>
        <strain>cv. Morex</strain>
    </source>
</reference>
<reference key="3">
    <citation type="journal article" date="1990" name="Curr. Genet.">
        <title>Sequence and transcriptional analysis of the barley ctDNA region upstream of psbD-psbC encoding trnK(UUU), rps16, trnQ(UUG), psbK, psbI, and trnS(GCU).</title>
        <authorList>
            <person name="Sexton T.B."/>
            <person name="Jones J.T."/>
            <person name="Mullet J.E."/>
        </authorList>
    </citation>
    <scope>NUCLEOTIDE SEQUENCE [GENOMIC DNA] OF 1-354</scope>
    <source>
        <tissue>Seedling</tissue>
    </source>
</reference>
<reference key="4">
    <citation type="journal article" date="1988" name="Nucleic Acids Res.">
        <title>Sequence and transcript map of barley chloroplast psbA gene.</title>
        <authorList>
            <person name="Boyer S.K."/>
            <person name="Mullet J.E."/>
        </authorList>
    </citation>
    <scope>NUCLEOTIDE SEQUENCE [GENOMIC DNA] OF 355-504</scope>
    <source>
        <strain>cv. Morex</strain>
    </source>
</reference>
<reference key="5">
    <citation type="journal article" date="1997" name="J. Mol. Biol.">
        <title>Splicing and intron-internal RNA editing of trnK-matK transcripts in barley plastids: support for MatK as an essential splice factor.</title>
        <authorList>
            <person name="Vogel J."/>
            <person name="Huebschmann T."/>
            <person name="Boerner T."/>
            <person name="Hess W.R."/>
        </authorList>
    </citation>
    <scope>RNA EDITING</scope>
    <scope>PROBABLE ROLE IN GROUP II INTRON SPLICING</scope>
    <source>
        <strain>cv. Albostrians</strain>
    </source>
</reference>
<sequence>MEKFEGYSEKQKSRQQYFVYPLLFQEYIYAFAHDYGLNGSEPVEIVSWNNKKFSSLLVKRLIIRMYQQNFLDNSVNHPNQDRLLDYKIFFYSEFYSQILSEGFAIVVEIPFSLRELSCPKEKEIPKFQNLRSIHSIFPFLEDKFLHLDYLSHIEIPYPIHLEILVQLLQYRIQDVPSLHLLRFFLNYYSNWNSFITSMKSILFFQKENKRLVKFLYNSYVSEYEFFLLFLRKQSSCLPLAYSGTFLERIHFSRKMEHFGIMYPGFSRKTLWFFMDPLIHYVRYQGKAILASKGSFFLKKKWKCYLINFWQYYFFFWTQPRRIHINQLANSCFDFMGYLSSVPKSPLLVRNQMLENSFLIDTRMKKFDTIVPATLLIGYLSKAQFCTGSGHPISKPIWTDLSDWDILDRFGRICRNLFHYYSGSSKKRTLYRLKYILRLSCARTLARKHKSTVRTFMQRLGSAFLEEFFTEEEQVFSLMFTKTTLFSFSGSHTERIWYLDIIGINDLVNPLN</sequence>